<dbReference type="EC" id="6.1.1.14" evidence="1"/>
<dbReference type="EMBL" id="CP001321">
    <property type="protein sequence ID" value="ACL33113.1"/>
    <property type="molecule type" value="Genomic_DNA"/>
</dbReference>
<dbReference type="RefSeq" id="WP_015939829.1">
    <property type="nucleotide sequence ID" value="NC_011852.1"/>
</dbReference>
<dbReference type="SMR" id="B8F711"/>
<dbReference type="STRING" id="557723.HAPS_1559"/>
<dbReference type="KEGG" id="hap:HAPS_1559"/>
<dbReference type="PATRIC" id="fig|557723.8.peg.1531"/>
<dbReference type="HOGENOM" id="CLU_007220_2_2_6"/>
<dbReference type="Proteomes" id="UP000006743">
    <property type="component" value="Chromosome"/>
</dbReference>
<dbReference type="GO" id="GO:0005829">
    <property type="term" value="C:cytosol"/>
    <property type="evidence" value="ECO:0007669"/>
    <property type="project" value="TreeGrafter"/>
</dbReference>
<dbReference type="GO" id="GO:0004814">
    <property type="term" value="F:arginine-tRNA ligase activity"/>
    <property type="evidence" value="ECO:0007669"/>
    <property type="project" value="InterPro"/>
</dbReference>
<dbReference type="GO" id="GO:0005524">
    <property type="term" value="F:ATP binding"/>
    <property type="evidence" value="ECO:0007669"/>
    <property type="project" value="UniProtKB-UniRule"/>
</dbReference>
<dbReference type="GO" id="GO:0004820">
    <property type="term" value="F:glycine-tRNA ligase activity"/>
    <property type="evidence" value="ECO:0007669"/>
    <property type="project" value="UniProtKB-UniRule"/>
</dbReference>
<dbReference type="GO" id="GO:0006420">
    <property type="term" value="P:arginyl-tRNA aminoacylation"/>
    <property type="evidence" value="ECO:0007669"/>
    <property type="project" value="InterPro"/>
</dbReference>
<dbReference type="GO" id="GO:0006426">
    <property type="term" value="P:glycyl-tRNA aminoacylation"/>
    <property type="evidence" value="ECO:0007669"/>
    <property type="project" value="UniProtKB-UniRule"/>
</dbReference>
<dbReference type="HAMAP" id="MF_00255">
    <property type="entry name" value="Gly_tRNA_synth_beta"/>
    <property type="match status" value="1"/>
</dbReference>
<dbReference type="InterPro" id="IPR008909">
    <property type="entry name" value="DALR_anticod-bd"/>
</dbReference>
<dbReference type="InterPro" id="IPR015944">
    <property type="entry name" value="Gly-tRNA-synth_bsu"/>
</dbReference>
<dbReference type="InterPro" id="IPR006194">
    <property type="entry name" value="Gly-tRNA-synth_heterodimer"/>
</dbReference>
<dbReference type="NCBIfam" id="TIGR00211">
    <property type="entry name" value="glyS"/>
    <property type="match status" value="1"/>
</dbReference>
<dbReference type="PANTHER" id="PTHR30075:SF2">
    <property type="entry name" value="GLYCINE--TRNA LIGASE, CHLOROPLASTIC_MITOCHONDRIAL 2"/>
    <property type="match status" value="1"/>
</dbReference>
<dbReference type="PANTHER" id="PTHR30075">
    <property type="entry name" value="GLYCYL-TRNA SYNTHETASE"/>
    <property type="match status" value="1"/>
</dbReference>
<dbReference type="Pfam" id="PF05746">
    <property type="entry name" value="DALR_1"/>
    <property type="match status" value="1"/>
</dbReference>
<dbReference type="Pfam" id="PF02092">
    <property type="entry name" value="tRNA_synt_2f"/>
    <property type="match status" value="1"/>
</dbReference>
<dbReference type="PRINTS" id="PR01045">
    <property type="entry name" value="TRNASYNTHGB"/>
</dbReference>
<dbReference type="SUPFAM" id="SSF109604">
    <property type="entry name" value="HD-domain/PDEase-like"/>
    <property type="match status" value="1"/>
</dbReference>
<dbReference type="PROSITE" id="PS50861">
    <property type="entry name" value="AA_TRNA_LIGASE_II_GLYAB"/>
    <property type="match status" value="1"/>
</dbReference>
<comment type="catalytic activity">
    <reaction evidence="1">
        <text>tRNA(Gly) + glycine + ATP = glycyl-tRNA(Gly) + AMP + diphosphate</text>
        <dbReference type="Rhea" id="RHEA:16013"/>
        <dbReference type="Rhea" id="RHEA-COMP:9664"/>
        <dbReference type="Rhea" id="RHEA-COMP:9683"/>
        <dbReference type="ChEBI" id="CHEBI:30616"/>
        <dbReference type="ChEBI" id="CHEBI:33019"/>
        <dbReference type="ChEBI" id="CHEBI:57305"/>
        <dbReference type="ChEBI" id="CHEBI:78442"/>
        <dbReference type="ChEBI" id="CHEBI:78522"/>
        <dbReference type="ChEBI" id="CHEBI:456215"/>
        <dbReference type="EC" id="6.1.1.14"/>
    </reaction>
</comment>
<comment type="subunit">
    <text evidence="1">Tetramer of two alpha and two beta subunits.</text>
</comment>
<comment type="subcellular location">
    <subcellularLocation>
        <location evidence="1">Cytoplasm</location>
    </subcellularLocation>
</comment>
<comment type="similarity">
    <text evidence="1">Belongs to the class-II aminoacyl-tRNA synthetase family.</text>
</comment>
<evidence type="ECO:0000255" key="1">
    <source>
        <dbReference type="HAMAP-Rule" id="MF_00255"/>
    </source>
</evidence>
<reference key="1">
    <citation type="journal article" date="2009" name="J. Bacteriol.">
        <title>Complete genome sequence of Haemophilus parasuis SH0165.</title>
        <authorList>
            <person name="Yue M."/>
            <person name="Yang F."/>
            <person name="Yang J."/>
            <person name="Bei W."/>
            <person name="Cai X."/>
            <person name="Chen L."/>
            <person name="Dong J."/>
            <person name="Zhou R."/>
            <person name="Jin M."/>
            <person name="Jin Q."/>
            <person name="Chen H."/>
        </authorList>
    </citation>
    <scope>NUCLEOTIDE SEQUENCE [LARGE SCALE GENOMIC DNA]</scope>
    <source>
        <strain>SH0165</strain>
    </source>
</reference>
<proteinExistence type="inferred from homology"/>
<keyword id="KW-0030">Aminoacyl-tRNA synthetase</keyword>
<keyword id="KW-0067">ATP-binding</keyword>
<keyword id="KW-0963">Cytoplasm</keyword>
<keyword id="KW-0436">Ligase</keyword>
<keyword id="KW-0547">Nucleotide-binding</keyword>
<keyword id="KW-0648">Protein biosynthesis</keyword>
<keyword id="KW-1185">Reference proteome</keyword>
<gene>
    <name evidence="1" type="primary">glyS</name>
    <name type="ordered locus">HAPS_1559</name>
</gene>
<organism>
    <name type="scientific">Glaesserella parasuis serovar 5 (strain SH0165)</name>
    <name type="common">Haemophilus parasuis</name>
    <dbReference type="NCBI Taxonomy" id="557723"/>
    <lineage>
        <taxon>Bacteria</taxon>
        <taxon>Pseudomonadati</taxon>
        <taxon>Pseudomonadota</taxon>
        <taxon>Gammaproteobacteria</taxon>
        <taxon>Pasteurellales</taxon>
        <taxon>Pasteurellaceae</taxon>
        <taxon>Glaesserella</taxon>
    </lineage>
</organism>
<accession>B8F711</accession>
<sequence>MTTQNFLAEIGTEELPPKALKKLATAFAENVEAELNQAGLSFDKVEWFAAPRRLAVKVLGLATAQPSKEVEKRGPAVSAAFDAEGKPTKAAEGWAKGCGITVEQAERIATDKGEWLVHRAVIEGQPTKNLLVGIISQALAKLPIPKTMRWGDKTEQFVRPVHTVTLLLGDELIEGEILGVASGTTVRGHRFLGEREFQISHADQYPALLKEKGSVVADFNERKALILAKAQEKATALGGVADIEEDLLDEVTSLVEYPNVLAAKFEERFLAVPAEALVYTMKGDQKYFPIYDKDGKLLPHFIFVSNINPEDPSKIIEGNEKVVRPRLTDAEFFFKTDLKQRLEDQLPRLETVLFQQQLGTLRDKTARIEQLAGEIAKQIGADETKAKRAGLLSKCDLMTNMVFEFTDTQGVMGMHYARHDGEDEEVAVALNEQYMPRFAGDELPKSLVASSVALADKFDTLTGIFGIGQAPKGSADPFALRRAALGALRIIVEKNLPLDLSDLVATSAKLFGDKLTNSNVVEEVVDFMLGRFRAWYQDEGIAVDVIQAVLARRPTRPADFDARVRAVSHFRTLDSAEALAAANKRVSNILAKVEGKISSEIDRTLLVEAEEKALAEQVITLQAELVPLFEKGEYQTALDRLAGLREVVDNFFDKVMVNAEDPKLRQNRQAILNNLRNLFLQVADISLLQ</sequence>
<feature type="chain" id="PRO_1000197202" description="Glycine--tRNA ligase beta subunit">
    <location>
        <begin position="1"/>
        <end position="689"/>
    </location>
</feature>
<name>SYGB_GLAP5</name>
<protein>
    <recommendedName>
        <fullName evidence="1">Glycine--tRNA ligase beta subunit</fullName>
        <ecNumber evidence="1">6.1.1.14</ecNumber>
    </recommendedName>
    <alternativeName>
        <fullName evidence="1">Glycyl-tRNA synthetase beta subunit</fullName>
        <shortName evidence="1">GlyRS</shortName>
    </alternativeName>
</protein>